<keyword id="KW-1003">Cell membrane</keyword>
<keyword id="KW-0967">Endosome</keyword>
<keyword id="KW-0472">Membrane</keyword>
<keyword id="KW-0597">Phosphoprotein</keyword>
<keyword id="KW-0653">Protein transport</keyword>
<keyword id="KW-0813">Transport</keyword>
<organism>
    <name type="scientific">Cricetulus griseus</name>
    <name type="common">Chinese hamster</name>
    <name type="synonym">Cricetulus barabensis griseus</name>
    <dbReference type="NCBI Taxonomy" id="10029"/>
    <lineage>
        <taxon>Eukaryota</taxon>
        <taxon>Metazoa</taxon>
        <taxon>Chordata</taxon>
        <taxon>Craniata</taxon>
        <taxon>Vertebrata</taxon>
        <taxon>Euteleostomi</taxon>
        <taxon>Mammalia</taxon>
        <taxon>Eutheria</taxon>
        <taxon>Euarchontoglires</taxon>
        <taxon>Glires</taxon>
        <taxon>Rodentia</taxon>
        <taxon>Myomorpha</taxon>
        <taxon>Muroidea</taxon>
        <taxon>Cricetidae</taxon>
        <taxon>Cricetinae</taxon>
        <taxon>Cricetulus</taxon>
    </lineage>
</organism>
<dbReference type="EMBL" id="AF371373">
    <property type="protein sequence ID" value="AAK53434.1"/>
    <property type="molecule type" value="mRNA"/>
</dbReference>
<dbReference type="RefSeq" id="NP_001231222.1">
    <property type="nucleotide sequence ID" value="NM_001244293.1"/>
</dbReference>
<dbReference type="SMR" id="Q91Y25"/>
<dbReference type="PaxDb" id="10029-NP_001231222.1"/>
<dbReference type="GeneID" id="100689255"/>
<dbReference type="KEGG" id="cge:100689255"/>
<dbReference type="CTD" id="28006"/>
<dbReference type="eggNOG" id="ENOG502QTIY">
    <property type="taxonomic scope" value="Eukaryota"/>
</dbReference>
<dbReference type="OrthoDB" id="751084at2759"/>
<dbReference type="Proteomes" id="UP000694386">
    <property type="component" value="Unplaced"/>
</dbReference>
<dbReference type="Proteomes" id="UP001108280">
    <property type="component" value="Chromosome 8"/>
</dbReference>
<dbReference type="GO" id="GO:0005829">
    <property type="term" value="C:cytosol"/>
    <property type="evidence" value="ECO:0007669"/>
    <property type="project" value="GOC"/>
</dbReference>
<dbReference type="GO" id="GO:0005769">
    <property type="term" value="C:early endosome"/>
    <property type="evidence" value="ECO:0000250"/>
    <property type="project" value="UniProtKB"/>
</dbReference>
<dbReference type="GO" id="GO:0031901">
    <property type="term" value="C:early endosome membrane"/>
    <property type="evidence" value="ECO:0007669"/>
    <property type="project" value="UniProtKB-SubCell"/>
</dbReference>
<dbReference type="GO" id="GO:0005886">
    <property type="term" value="C:plasma membrane"/>
    <property type="evidence" value="ECO:0007669"/>
    <property type="project" value="UniProtKB-SubCell"/>
</dbReference>
<dbReference type="GO" id="GO:0071203">
    <property type="term" value="C:WASH complex"/>
    <property type="evidence" value="ECO:0000250"/>
    <property type="project" value="UniProtKB"/>
</dbReference>
<dbReference type="GO" id="GO:1901981">
    <property type="term" value="F:phosphatidylinositol phosphate binding"/>
    <property type="evidence" value="ECO:0007669"/>
    <property type="project" value="TreeGrafter"/>
</dbReference>
<dbReference type="GO" id="GO:1905394">
    <property type="term" value="F:retromer complex binding"/>
    <property type="evidence" value="ECO:0007669"/>
    <property type="project" value="TreeGrafter"/>
</dbReference>
<dbReference type="GO" id="GO:0036010">
    <property type="term" value="P:protein localization to endosome"/>
    <property type="evidence" value="ECO:0007669"/>
    <property type="project" value="TreeGrafter"/>
</dbReference>
<dbReference type="GO" id="GO:0015031">
    <property type="term" value="P:protein transport"/>
    <property type="evidence" value="ECO:0007669"/>
    <property type="project" value="UniProtKB-KW"/>
</dbReference>
<dbReference type="GO" id="GO:0042147">
    <property type="term" value="P:retrograde transport, endosome to Golgi"/>
    <property type="evidence" value="ECO:0000250"/>
    <property type="project" value="UniProtKB"/>
</dbReference>
<dbReference type="InterPro" id="IPR029341">
    <property type="entry name" value="FAM21/CAPZIP"/>
</dbReference>
<dbReference type="PANTHER" id="PTHR21669">
    <property type="entry name" value="CAPZ-INTERACTING PROTEIN AND RELATED PROTEINS"/>
    <property type="match status" value="1"/>
</dbReference>
<dbReference type="PANTHER" id="PTHR21669:SF38">
    <property type="entry name" value="WASH COMPLEX SUBUNIT 2A-RELATED"/>
    <property type="match status" value="1"/>
</dbReference>
<dbReference type="Pfam" id="PF15255">
    <property type="entry name" value="CAP-ZIP_m"/>
    <property type="match status" value="1"/>
</dbReference>
<gene>
    <name evidence="2" type="primary">Washc2</name>
    <name type="synonym">Fam21</name>
</gene>
<sequence>MNRTSPDSERPPGSEPVWERPWSVEEIRRSSQNWSLAADAGLLQFLQEFSQQTISRTHEIKKQVDGLIQETKATHCRLHNVFNDFLMLSNTQFIENRVYDEEVEEQALKAEAEKSEQEKTREQKEVDLIPKVREAVNYGLQVLDSAFEQLDIKAGNSDSEEEDANERVELILEPKDLYIDRPLPYLIGSKLFMEQEDVGLGELSSEEGSVGSDRGSIVDSEEEKEEEESDEDFASRSDNDQNQHTTRMSDEEEDDDGDLFADSEKEGDDIEDIEENTKSKRPTSFADELAARIKGDMSNQLKEEQIADGKPQKTMKEKKEKRTPPDDEEDILFPPPKLTDEDFSPFGSRGGLFSGQGLFDDEDESDLFRETSRDRPAQAPVSEESSSPKPGKKIPAGAVSVFLDTSAPSLKEFQKHEQPTPGKNPHLPTPAGLFDDNDDDDDNFFVPSCNKPPKTDKVKSTSIIFDDEEGDLFREKPAPLPVASVSQADENTTRADKTITLPSSKNPKLVSETKTQKGLFSDEEDSEDLFSSQNSSKSKSASLLSSQLPTSGSLFGDEDEEDNLFGSAPAKKQVSSQQPQSQEKPKPSEQPKKKASALLFSSDEEDQWNITDSHTKLATDRKSKGELWDSGTIQGQEVKAVKKTNLFEEDDDEADLFAIAKDSQKKTQRTSLLFEDDDDSGSSLFGFPPASVPPATMKKESISKVPSLFSDEEENEVPSRVKSVDVKVGNGKEADVAKVTEKEGLLTASDQEAAGPSDLFSSSPLDKGTKGRTKTVLSLFDEEEDKVEDQSNTHVSKNDAEKGLKTDGRPKSTGVFQDEELLFSHKLQKDNDPDVDLFAGTKKTRVSVPLDGSLFGDDEDYDLFSSAKTQPVVPEKKGALKKDRPVSLKNEEAPESTEGSKEKSLWKAETPQDSSGLTPFKSREPSSRIGKIQANLAINPAALLPTAALQIPGTKPALCELAFPSSEPGRSHGPESVPTLAGSEEAGVSFDLPAQADTLHSANKSRVKVRGKRRPQTRAARRLAAQESSESEDMSVSRGPVAQLASSPILPNGHQPHLQPRMASGEISSEKAMAPAAPPWESGPALSAVDRSFFVASLPQTGNEADLFDSGDIFPKSIGSQSMEGTKVKAAETPAHLSGGSKEKSLVFPALSEASSTDDLFQTVKPRPAKKRNPFPLLEDEDDLFADRKGKKNELKSDSHQDIISKTQDIFEDDIFATEAVKPFQKKREKERTLEPNLFDDNIDIFADLNVKPKEKSKKKVEAKSVFDDDTDDIFSSGLQAKKSKPKSQSAEATSELRSDHKVSNIFDDPLNAFGSQ</sequence>
<proteinExistence type="evidence at transcript level"/>
<comment type="function">
    <text evidence="4">Acts as a component of the WASH core complex that functions as a nucleation-promoting factor (NPF) at the surface of endosomes, where it recruits and activates the Arp2/3 complex to induce actin polymerization, playing a key role in the fission of tubules that serve as transport intermediates during endosome sorting. Mediates the recruitment of the WASH core complex to endosome membranes via binding to phospholipids and VPS35 of the retromer CSC. Mediates the recruitment of the F-actin-capping protein dimer to the WASH core complex probably promoting localized F-actin polymerization needed for vesicle scission. Via its C-terminus binds various phospholipids, most strongly phosphatidylinositol 4-phosphate (PtdIns-(4)P), phosphatidylinositol 5-phosphate (PtdIns-(5)P) and phosphatidylinositol 3,5-bisphosphate (PtdIns-(3,5)P2). Involved in the endosome-to-plasma membrane trafficking and recycling of SNX27-retromer-dependent cargo proteins, such as GLUT1. Required for the association of DNAJC13, ENTR1, ANKRD50 with retromer CSC subunit VPS35. Required for the endosomal recruitment of CCC complex subunits COMMD1, CCDC93 and C16orf62 homolog (By similarity).</text>
</comment>
<comment type="subunit">
    <text evidence="1 4">Component of the WASH core complex also described as WASH regulatory complex SHRC composed of WASHC1, WASHC2, WASHC3, WASHC4 and WASHC5; in the complex interacts (via N-terminus) directly with WASHC1. The WASH core complex associates via WASHC2 with the F-actin-capping protein dimer (formed by CAPZA1, CAPZA2 or CAPZA3 and CAPZB) in a transient or substoichiometric manner which was initially described as WASH complex. Interacts with VPS35; mediates the association with the retromer CSC complex. Interacts with FKBP15. Interacts with CCDC93, CCDC22, C16orf62 homolog; indicative for an association of the WASH core complex with the CCC complex (By similarity). Directly interacts with TBC1D23 (By similarity).</text>
</comment>
<comment type="subcellular location">
    <subcellularLocation>
        <location evidence="4">Early endosome membrane</location>
    </subcellularLocation>
    <subcellularLocation>
        <location evidence="4">Cell membrane</location>
    </subcellularLocation>
</comment>
<comment type="domain">
    <text evidence="4">The LFa (leucine-phenylalanine-acidic) motif bind directly to VPS35 of retromer CSC; adjacent motifs can act cooperatively to bind multiple CSCs, although there is significant variability in the affinities of different motifs for retromer.</text>
</comment>
<comment type="similarity">
    <text evidence="6">Belongs to the FAM21 family.</text>
</comment>
<name>WASC2_CRIGR</name>
<reference key="1">
    <citation type="submission" date="2001-04" db="EMBL/GenBank/DDBJ databases">
        <authorList>
            <person name="Bair C.-H."/>
            <person name="Chang W."/>
        </authorList>
    </citation>
    <scope>NUCLEOTIDE SEQUENCE [MRNA]</scope>
    <source>
        <tissue>Ovary</tissue>
    </source>
</reference>
<evidence type="ECO:0000250" key="1">
    <source>
        <dbReference type="UniProtKB" id="Q641Q2"/>
    </source>
</evidence>
<evidence type="ECO:0000250" key="2">
    <source>
        <dbReference type="UniProtKB" id="Q6PGL7"/>
    </source>
</evidence>
<evidence type="ECO:0000250" key="3">
    <source>
        <dbReference type="UniProtKB" id="Q80X08"/>
    </source>
</evidence>
<evidence type="ECO:0000250" key="4">
    <source>
        <dbReference type="UniProtKB" id="Q9Y4E1"/>
    </source>
</evidence>
<evidence type="ECO:0000256" key="5">
    <source>
        <dbReference type="SAM" id="MobiDB-lite"/>
    </source>
</evidence>
<evidence type="ECO:0000305" key="6"/>
<feature type="chain" id="PRO_0000317432" description="WASH complex subunit 2">
    <location>
        <begin position="1"/>
        <end position="1317"/>
    </location>
</feature>
<feature type="region of interest" description="Sufficient for interaction with WASHC3, WASHC4 and WASHC5; required for interaction with WASHC1" evidence="4">
    <location>
        <begin position="1"/>
        <end position="219"/>
    </location>
</feature>
<feature type="region of interest" description="Disordered" evidence="5">
    <location>
        <begin position="201"/>
        <end position="630"/>
    </location>
</feature>
<feature type="region of interest" description="Sufficient for interaction with CCDC93" evidence="4">
    <location>
        <begin position="348"/>
        <end position="582"/>
    </location>
</feature>
<feature type="region of interest" description="Interaction with VPS35" evidence="4">
    <location>
        <begin position="349"/>
        <end position="1317"/>
    </location>
</feature>
<feature type="region of interest" description="Disordered" evidence="5">
    <location>
        <begin position="667"/>
        <end position="817"/>
    </location>
</feature>
<feature type="region of interest" description="Disordered" evidence="5">
    <location>
        <begin position="867"/>
        <end position="926"/>
    </location>
</feature>
<feature type="region of interest" description="Interaction with phospholipids" evidence="4">
    <location>
        <begin position="912"/>
        <end position="1317"/>
    </location>
</feature>
<feature type="region of interest" description="Disordered" evidence="5">
    <location>
        <begin position="960"/>
        <end position="1079"/>
    </location>
</feature>
<feature type="region of interest" description="Required for interaction with F-actin-capping protein subunit alpha (CAPZA1 or CAPZA2 or CAPZA3)" evidence="4">
    <location>
        <begin position="1004"/>
        <end position="1022"/>
    </location>
</feature>
<feature type="region of interest" description="Disordered" evidence="5">
    <location>
        <begin position="1119"/>
        <end position="1141"/>
    </location>
</feature>
<feature type="region of interest" description="Disordered" evidence="5">
    <location>
        <begin position="1158"/>
        <end position="1183"/>
    </location>
</feature>
<feature type="region of interest" description="Disordered" evidence="5">
    <location>
        <begin position="1277"/>
        <end position="1317"/>
    </location>
</feature>
<feature type="short sequence motif" description="LFa 1" evidence="4">
    <location>
        <begin position="358"/>
        <end position="368"/>
    </location>
</feature>
<feature type="short sequence motif" description="LFa 2" evidence="4">
    <location>
        <begin position="433"/>
        <end position="445"/>
    </location>
</feature>
<feature type="short sequence motif" description="LFa 3" evidence="4">
    <location>
        <begin position="464"/>
        <end position="473"/>
    </location>
</feature>
<feature type="short sequence motif" description="LFa 4" evidence="4">
    <location>
        <begin position="519"/>
        <end position="530"/>
    </location>
</feature>
<feature type="short sequence motif" description="LFa 5" evidence="4">
    <location>
        <begin position="554"/>
        <end position="565"/>
    </location>
</feature>
<feature type="short sequence motif" description="LFa 6" evidence="4">
    <location>
        <begin position="599"/>
        <end position="611"/>
    </location>
</feature>
<feature type="short sequence motif" description="LFa 7" evidence="4">
    <location>
        <begin position="646"/>
        <end position="657"/>
    </location>
</feature>
<feature type="short sequence motif" description="LFa 8" evidence="4">
    <location>
        <begin position="673"/>
        <end position="685"/>
    </location>
</feature>
<feature type="short sequence motif" description="LFa 9" evidence="4">
    <location>
        <begin position="815"/>
        <end position="823"/>
    </location>
</feature>
<feature type="short sequence motif" description="LFa 10" evidence="4">
    <location>
        <begin position="832"/>
        <end position="838"/>
    </location>
</feature>
<feature type="short sequence motif" description="LFa 11" evidence="4">
    <location>
        <begin position="854"/>
        <end position="864"/>
    </location>
</feature>
<feature type="short sequence motif" description="LFa 12" evidence="4">
    <location>
        <begin position="1107"/>
        <end position="1114"/>
    </location>
</feature>
<feature type="short sequence motif" description="LFa 13" evidence="4">
    <location>
        <begin position="1147"/>
        <end position="1161"/>
    </location>
</feature>
<feature type="short sequence motif" description="LFa 14" evidence="4">
    <location>
        <begin position="1177"/>
        <end position="1185"/>
    </location>
</feature>
<feature type="short sequence motif" description="LFa 15" evidence="4">
    <location>
        <begin position="1210"/>
        <end position="1216"/>
    </location>
</feature>
<feature type="short sequence motif" description="LFa 16" evidence="4">
    <location>
        <begin position="1238"/>
        <end position="1246"/>
    </location>
</feature>
<feature type="short sequence motif" description="LFa 17" evidence="4">
    <location>
        <begin position="1266"/>
        <end position="1275"/>
    </location>
</feature>
<feature type="short sequence motif" description="LFa 18" evidence="4">
    <location>
        <begin position="1306"/>
        <end position="1314"/>
    </location>
</feature>
<feature type="compositionally biased region" description="Low complexity" evidence="5">
    <location>
        <begin position="201"/>
        <end position="213"/>
    </location>
</feature>
<feature type="compositionally biased region" description="Acidic residues" evidence="5">
    <location>
        <begin position="219"/>
        <end position="232"/>
    </location>
</feature>
<feature type="compositionally biased region" description="Acidic residues" evidence="5">
    <location>
        <begin position="250"/>
        <end position="274"/>
    </location>
</feature>
<feature type="compositionally biased region" description="Basic and acidic residues" evidence="5">
    <location>
        <begin position="289"/>
        <end position="325"/>
    </location>
</feature>
<feature type="compositionally biased region" description="Basic and acidic residues" evidence="5">
    <location>
        <begin position="366"/>
        <end position="376"/>
    </location>
</feature>
<feature type="compositionally biased region" description="Low complexity" evidence="5">
    <location>
        <begin position="379"/>
        <end position="399"/>
    </location>
</feature>
<feature type="compositionally biased region" description="Polar residues" evidence="5">
    <location>
        <begin position="500"/>
        <end position="518"/>
    </location>
</feature>
<feature type="compositionally biased region" description="Low complexity" evidence="5">
    <location>
        <begin position="529"/>
        <end position="548"/>
    </location>
</feature>
<feature type="compositionally biased region" description="Low complexity" evidence="5">
    <location>
        <begin position="569"/>
        <end position="582"/>
    </location>
</feature>
<feature type="compositionally biased region" description="Basic and acidic residues" evidence="5">
    <location>
        <begin position="583"/>
        <end position="592"/>
    </location>
</feature>
<feature type="compositionally biased region" description="Basic and acidic residues" evidence="5">
    <location>
        <begin position="613"/>
        <end position="627"/>
    </location>
</feature>
<feature type="compositionally biased region" description="Basic and acidic residues" evidence="5">
    <location>
        <begin position="717"/>
        <end position="744"/>
    </location>
</feature>
<feature type="compositionally biased region" description="Basic and acidic residues" evidence="5">
    <location>
        <begin position="788"/>
        <end position="810"/>
    </location>
</feature>
<feature type="compositionally biased region" description="Basic and acidic residues" evidence="5">
    <location>
        <begin position="874"/>
        <end position="906"/>
    </location>
</feature>
<feature type="compositionally biased region" description="Basic residues" evidence="5">
    <location>
        <begin position="1003"/>
        <end position="1021"/>
    </location>
</feature>
<feature type="modified residue" description="Phosphoserine" evidence="2">
    <location>
        <position position="157"/>
    </location>
</feature>
<feature type="modified residue" description="Phosphoserine" evidence="2">
    <location>
        <position position="159"/>
    </location>
</feature>
<feature type="modified residue" description="Phosphoserine" evidence="3">
    <location>
        <position position="204"/>
    </location>
</feature>
<feature type="modified residue" description="Phosphoserine" evidence="3">
    <location>
        <position position="205"/>
    </location>
</feature>
<feature type="modified residue" description="Phosphoserine" evidence="3">
    <location>
        <position position="209"/>
    </location>
</feature>
<feature type="modified residue" description="Phosphoserine" evidence="2">
    <location>
        <position position="284"/>
    </location>
</feature>
<feature type="modified residue" description="Phosphothreonine" evidence="2">
    <location>
        <position position="323"/>
    </location>
</feature>
<feature type="modified residue" description="Phosphoserine" evidence="3">
    <location>
        <position position="385"/>
    </location>
</feature>
<feature type="modified residue" description="Phosphoserine" evidence="2">
    <location>
        <position position="387"/>
    </location>
</feature>
<feature type="modified residue" description="Phosphoserine" evidence="2">
    <location>
        <position position="521"/>
    </location>
</feature>
<feature type="modified residue" description="Phosphoserine" evidence="3">
    <location>
        <position position="526"/>
    </location>
</feature>
<feature type="modified residue" description="Phosphoserine" evidence="2">
    <location>
        <position position="601"/>
    </location>
</feature>
<feature type="modified residue" description="Phosphoserine" evidence="2">
    <location>
        <position position="602"/>
    </location>
</feature>
<feature type="modified residue" description="Phosphoserine" evidence="2">
    <location>
        <position position="710"/>
    </location>
</feature>
<feature type="modified residue" description="Phosphoserine" evidence="3">
    <location>
        <position position="763"/>
    </location>
</feature>
<feature type="modified residue" description="Phosphoserine" evidence="2">
    <location>
        <position position="778"/>
    </location>
</feature>
<feature type="modified residue" description="Phosphoserine" evidence="2">
    <location>
        <position position="853"/>
    </location>
</feature>
<feature type="modified residue" description="Phosphoserine" evidence="1">
    <location>
        <position position="1029"/>
    </location>
</feature>
<feature type="modified residue" description="Phosphoserine" evidence="3">
    <location>
        <position position="1047"/>
    </location>
</feature>
<feature type="modified residue" description="Phosphoserine" evidence="1">
    <location>
        <position position="1064"/>
    </location>
</feature>
<feature type="modified residue" description="Phosphoserine" evidence="1">
    <location>
        <position position="1092"/>
    </location>
</feature>
<feature type="modified residue" description="Phosphoserine" evidence="2">
    <location>
        <position position="1152"/>
    </location>
</feature>
<feature type="modified residue" description="Phosphoserine" evidence="2">
    <location>
        <position position="1155"/>
    </location>
</feature>
<feature type="modified residue" description="Phosphoserine" evidence="2">
    <location>
        <position position="1156"/>
    </location>
</feature>
<feature type="modified residue" description="Phosphoserine" evidence="2">
    <location>
        <position position="1316"/>
    </location>
</feature>
<accession>Q91Y25</accession>
<protein>
    <recommendedName>
        <fullName evidence="2">WASH complex subunit 2</fullName>
    </recommendedName>
</protein>